<protein>
    <recommendedName>
        <fullName evidence="1">Carbohydrate deacetylase</fullName>
        <ecNumber evidence="1">3.5.1.-</ecNumber>
    </recommendedName>
</protein>
<feature type="chain" id="PRO_0000051604" description="Carbohydrate deacetylase">
    <location>
        <begin position="1"/>
        <end position="251"/>
    </location>
</feature>
<feature type="binding site" evidence="1">
    <location>
        <position position="59"/>
    </location>
    <ligand>
        <name>Mg(2+)</name>
        <dbReference type="ChEBI" id="CHEBI:18420"/>
    </ligand>
</feature>
<feature type="binding site" evidence="1">
    <location>
        <position position="122"/>
    </location>
    <ligand>
        <name>Mg(2+)</name>
        <dbReference type="ChEBI" id="CHEBI:18420"/>
    </ligand>
</feature>
<gene>
    <name type="ordered locus">VP2633</name>
</gene>
<organism>
    <name type="scientific">Vibrio parahaemolyticus serotype O3:K6 (strain RIMD 2210633)</name>
    <dbReference type="NCBI Taxonomy" id="223926"/>
    <lineage>
        <taxon>Bacteria</taxon>
        <taxon>Pseudomonadati</taxon>
        <taxon>Pseudomonadota</taxon>
        <taxon>Gammaproteobacteria</taxon>
        <taxon>Vibrionales</taxon>
        <taxon>Vibrionaceae</taxon>
        <taxon>Vibrio</taxon>
    </lineage>
</organism>
<comment type="function">
    <text evidence="1">Probably catalyzes the deacetylation of acetylated carbohydrates an important step in the degradation of oligosaccharides.</text>
</comment>
<comment type="cofactor">
    <cofactor evidence="1">
        <name>Mg(2+)</name>
        <dbReference type="ChEBI" id="CHEBI:18420"/>
    </cofactor>
</comment>
<comment type="subunit">
    <text evidence="1">Homodimer.</text>
</comment>
<comment type="similarity">
    <text evidence="1">Belongs to the YdjC deacetylase family.</text>
</comment>
<proteinExistence type="inferred from homology"/>
<dbReference type="EC" id="3.5.1.-" evidence="1"/>
<dbReference type="EMBL" id="BA000031">
    <property type="protein sequence ID" value="BAC60896.1"/>
    <property type="molecule type" value="Genomic_DNA"/>
</dbReference>
<dbReference type="RefSeq" id="NP_799012.1">
    <property type="nucleotide sequence ID" value="NC_004603.1"/>
</dbReference>
<dbReference type="SMR" id="Q87LH9"/>
<dbReference type="GeneID" id="1190177"/>
<dbReference type="KEGG" id="vpa:VP2633"/>
<dbReference type="PATRIC" id="fig|223926.6.peg.2529"/>
<dbReference type="eggNOG" id="COG3394">
    <property type="taxonomic scope" value="Bacteria"/>
</dbReference>
<dbReference type="HOGENOM" id="CLU_064244_4_0_6"/>
<dbReference type="BRENDA" id="3.5.1.105">
    <property type="organism ID" value="15981"/>
</dbReference>
<dbReference type="Proteomes" id="UP000002493">
    <property type="component" value="Chromosome 1"/>
</dbReference>
<dbReference type="GO" id="GO:0019213">
    <property type="term" value="F:deacetylase activity"/>
    <property type="evidence" value="ECO:0007669"/>
    <property type="project" value="TreeGrafter"/>
</dbReference>
<dbReference type="GO" id="GO:0016811">
    <property type="term" value="F:hydrolase activity, acting on carbon-nitrogen (but not peptide) bonds, in linear amides"/>
    <property type="evidence" value="ECO:0007669"/>
    <property type="project" value="UniProtKB-UniRule"/>
</dbReference>
<dbReference type="GO" id="GO:0046872">
    <property type="term" value="F:metal ion binding"/>
    <property type="evidence" value="ECO:0007669"/>
    <property type="project" value="UniProtKB-KW"/>
</dbReference>
<dbReference type="GO" id="GO:0000272">
    <property type="term" value="P:polysaccharide catabolic process"/>
    <property type="evidence" value="ECO:0007669"/>
    <property type="project" value="InterPro"/>
</dbReference>
<dbReference type="CDD" id="cd10803">
    <property type="entry name" value="YdjC_EF3048_like"/>
    <property type="match status" value="1"/>
</dbReference>
<dbReference type="Gene3D" id="3.20.20.370">
    <property type="entry name" value="Glycoside hydrolase/deacetylase"/>
    <property type="match status" value="1"/>
</dbReference>
<dbReference type="HAMAP" id="MF_01246">
    <property type="entry name" value="COD"/>
    <property type="match status" value="1"/>
</dbReference>
<dbReference type="InterPro" id="IPR022948">
    <property type="entry name" value="COD_ChbG_bac"/>
</dbReference>
<dbReference type="InterPro" id="IPR011330">
    <property type="entry name" value="Glyco_hydro/deAcase_b/a-brl"/>
</dbReference>
<dbReference type="InterPro" id="IPR006879">
    <property type="entry name" value="YdjC-like"/>
</dbReference>
<dbReference type="NCBIfam" id="NF002559">
    <property type="entry name" value="PRK02134.1"/>
    <property type="match status" value="1"/>
</dbReference>
<dbReference type="PANTHER" id="PTHR31609:SF1">
    <property type="entry name" value="CARBOHYDRATE DEACETYLASE"/>
    <property type="match status" value="1"/>
</dbReference>
<dbReference type="PANTHER" id="PTHR31609">
    <property type="entry name" value="YDJC DEACETYLASE FAMILY MEMBER"/>
    <property type="match status" value="1"/>
</dbReference>
<dbReference type="Pfam" id="PF04794">
    <property type="entry name" value="YdjC"/>
    <property type="match status" value="1"/>
</dbReference>
<dbReference type="SUPFAM" id="SSF88713">
    <property type="entry name" value="Glycoside hydrolase/deacetylase"/>
    <property type="match status" value="1"/>
</dbReference>
<reference key="1">
    <citation type="journal article" date="2003" name="Lancet">
        <title>Genome sequence of Vibrio parahaemolyticus: a pathogenic mechanism distinct from that of V. cholerae.</title>
        <authorList>
            <person name="Makino K."/>
            <person name="Oshima K."/>
            <person name="Kurokawa K."/>
            <person name="Yokoyama K."/>
            <person name="Uda T."/>
            <person name="Tagomori K."/>
            <person name="Iijima Y."/>
            <person name="Najima M."/>
            <person name="Nakano M."/>
            <person name="Yamashita A."/>
            <person name="Kubota Y."/>
            <person name="Kimura S."/>
            <person name="Yasunaga T."/>
            <person name="Honda T."/>
            <person name="Shinagawa H."/>
            <person name="Hattori M."/>
            <person name="Iida T."/>
        </authorList>
    </citation>
    <scope>NUCLEOTIDE SEQUENCE [LARGE SCALE GENOMIC DNA]</scope>
    <source>
        <strain>RIMD 2210633</strain>
    </source>
</reference>
<accession>Q87LH9</accession>
<evidence type="ECO:0000255" key="1">
    <source>
        <dbReference type="HAMAP-Rule" id="MF_01246"/>
    </source>
</evidence>
<name>YDJC_VIBPA</name>
<keyword id="KW-0119">Carbohydrate metabolism</keyword>
<keyword id="KW-0378">Hydrolase</keyword>
<keyword id="KW-0460">Magnesium</keyword>
<keyword id="KW-0479">Metal-binding</keyword>
<sequence>MKVIFNADDFGLTQGVNNGIVKSHQDGVVKSTTMMVGMDAEQNAIELAHQNPDLKIGVHLRFTAGAPLTEHPNLTNGRTHFVKYSELWNKQDFEAQAVYDEAKAQIDHFLSLGLTLSHLDSHHHAHTHPQILPIVQKLAKEHRVPLRGSGICHQPMTTSYFFTDEFYDQKVSLDGLMQHLLSLKENYDVVEVMCHPAYADQPLIMKSGYALQRELELQVLTSPILKEQLAQHGIAVTDYSALVSTSQVVGV</sequence>